<reference key="1">
    <citation type="journal article" date="2005" name="Nature">
        <title>The map-based sequence of the rice genome.</title>
        <authorList>
            <consortium name="International rice genome sequencing project (IRGSP)"/>
        </authorList>
    </citation>
    <scope>NUCLEOTIDE SEQUENCE [LARGE SCALE GENOMIC DNA]</scope>
    <source>
        <strain>cv. Nipponbare</strain>
    </source>
</reference>
<reference key="2">
    <citation type="journal article" date="2008" name="Nucleic Acids Res.">
        <title>The rice annotation project database (RAP-DB): 2008 update.</title>
        <authorList>
            <consortium name="The rice annotation project (RAP)"/>
        </authorList>
    </citation>
    <scope>GENOME REANNOTATION</scope>
    <source>
        <strain>cv. Nipponbare</strain>
    </source>
</reference>
<reference key="3">
    <citation type="journal article" date="2013" name="Rice">
        <title>Improvement of the Oryza sativa Nipponbare reference genome using next generation sequence and optical map data.</title>
        <authorList>
            <person name="Kawahara Y."/>
            <person name="de la Bastide M."/>
            <person name="Hamilton J.P."/>
            <person name="Kanamori H."/>
            <person name="McCombie W.R."/>
            <person name="Ouyang S."/>
            <person name="Schwartz D.C."/>
            <person name="Tanaka T."/>
            <person name="Wu J."/>
            <person name="Zhou S."/>
            <person name="Childs K.L."/>
            <person name="Davidson R.M."/>
            <person name="Lin H."/>
            <person name="Quesada-Ocampo L."/>
            <person name="Vaillancourt B."/>
            <person name="Sakai H."/>
            <person name="Lee S.S."/>
            <person name="Kim J."/>
            <person name="Numa H."/>
            <person name="Itoh T."/>
            <person name="Buell C.R."/>
            <person name="Matsumoto T."/>
        </authorList>
    </citation>
    <scope>GENOME REANNOTATION</scope>
    <source>
        <strain>cv. Nipponbare</strain>
    </source>
</reference>
<reference key="4">
    <citation type="journal article" date="2005" name="PLoS Biol.">
        <title>The genomes of Oryza sativa: a history of duplications.</title>
        <authorList>
            <person name="Yu J."/>
            <person name="Wang J."/>
            <person name="Lin W."/>
            <person name="Li S."/>
            <person name="Li H."/>
            <person name="Zhou J."/>
            <person name="Ni P."/>
            <person name="Dong W."/>
            <person name="Hu S."/>
            <person name="Zeng C."/>
            <person name="Zhang J."/>
            <person name="Zhang Y."/>
            <person name="Li R."/>
            <person name="Xu Z."/>
            <person name="Li S."/>
            <person name="Li X."/>
            <person name="Zheng H."/>
            <person name="Cong L."/>
            <person name="Lin L."/>
            <person name="Yin J."/>
            <person name="Geng J."/>
            <person name="Li G."/>
            <person name="Shi J."/>
            <person name="Liu J."/>
            <person name="Lv H."/>
            <person name="Li J."/>
            <person name="Wang J."/>
            <person name="Deng Y."/>
            <person name="Ran L."/>
            <person name="Shi X."/>
            <person name="Wang X."/>
            <person name="Wu Q."/>
            <person name="Li C."/>
            <person name="Ren X."/>
            <person name="Wang J."/>
            <person name="Wang X."/>
            <person name="Li D."/>
            <person name="Liu D."/>
            <person name="Zhang X."/>
            <person name="Ji Z."/>
            <person name="Zhao W."/>
            <person name="Sun Y."/>
            <person name="Zhang Z."/>
            <person name="Bao J."/>
            <person name="Han Y."/>
            <person name="Dong L."/>
            <person name="Ji J."/>
            <person name="Chen P."/>
            <person name="Wu S."/>
            <person name="Liu J."/>
            <person name="Xiao Y."/>
            <person name="Bu D."/>
            <person name="Tan J."/>
            <person name="Yang L."/>
            <person name="Ye C."/>
            <person name="Zhang J."/>
            <person name="Xu J."/>
            <person name="Zhou Y."/>
            <person name="Yu Y."/>
            <person name="Zhang B."/>
            <person name="Zhuang S."/>
            <person name="Wei H."/>
            <person name="Liu B."/>
            <person name="Lei M."/>
            <person name="Yu H."/>
            <person name="Li Y."/>
            <person name="Xu H."/>
            <person name="Wei S."/>
            <person name="He X."/>
            <person name="Fang L."/>
            <person name="Zhang Z."/>
            <person name="Zhang Y."/>
            <person name="Huang X."/>
            <person name="Su Z."/>
            <person name="Tong W."/>
            <person name="Li J."/>
            <person name="Tong Z."/>
            <person name="Li S."/>
            <person name="Ye J."/>
            <person name="Wang L."/>
            <person name="Fang L."/>
            <person name="Lei T."/>
            <person name="Chen C.-S."/>
            <person name="Chen H.-C."/>
            <person name="Xu Z."/>
            <person name="Li H."/>
            <person name="Huang H."/>
            <person name="Zhang F."/>
            <person name="Xu H."/>
            <person name="Li N."/>
            <person name="Zhao C."/>
            <person name="Li S."/>
            <person name="Dong L."/>
            <person name="Huang Y."/>
            <person name="Li L."/>
            <person name="Xi Y."/>
            <person name="Qi Q."/>
            <person name="Li W."/>
            <person name="Zhang B."/>
            <person name="Hu W."/>
            <person name="Zhang Y."/>
            <person name="Tian X."/>
            <person name="Jiao Y."/>
            <person name="Liang X."/>
            <person name="Jin J."/>
            <person name="Gao L."/>
            <person name="Zheng W."/>
            <person name="Hao B."/>
            <person name="Liu S.-M."/>
            <person name="Wang W."/>
            <person name="Yuan L."/>
            <person name="Cao M."/>
            <person name="McDermott J."/>
            <person name="Samudrala R."/>
            <person name="Wang J."/>
            <person name="Wong G.K.-S."/>
            <person name="Yang H."/>
        </authorList>
    </citation>
    <scope>NUCLEOTIDE SEQUENCE [LARGE SCALE GENOMIC DNA]</scope>
    <source>
        <strain>cv. Nipponbare</strain>
    </source>
</reference>
<reference key="5">
    <citation type="journal article" date="2003" name="Science">
        <title>Collection, mapping, and annotation of over 28,000 cDNA clones from japonica rice.</title>
        <authorList>
            <consortium name="The rice full-length cDNA consortium"/>
        </authorList>
    </citation>
    <scope>NUCLEOTIDE SEQUENCE [LARGE SCALE MRNA] OF 18-919</scope>
    <source>
        <strain>cv. Nipponbare</strain>
    </source>
</reference>
<reference key="6">
    <citation type="journal article" date="2009" name="Ann. Bot.">
        <title>Evaluating the microtubule cytoskeleton and its interacting proteins in monocots by mining the rice genome.</title>
        <authorList>
            <person name="Guo L."/>
            <person name="Ho C.M."/>
            <person name="Kong Z."/>
            <person name="Lee Y.R."/>
            <person name="Qian Q."/>
            <person name="Liu B."/>
        </authorList>
    </citation>
    <scope>GENE FAMILY</scope>
    <scope>NOMENCLATURE</scope>
</reference>
<accession>Q6YU88</accession>
<accession>A0A0P0VDK0</accession>
<accession>B9F1N7</accession>
<keyword id="KW-0067">ATP-binding</keyword>
<keyword id="KW-0493">Microtubule</keyword>
<keyword id="KW-0505">Motor protein</keyword>
<keyword id="KW-0547">Nucleotide-binding</keyword>
<keyword id="KW-1185">Reference proteome</keyword>
<evidence type="ECO:0000255" key="1">
    <source>
        <dbReference type="PROSITE-ProRule" id="PRU00283"/>
    </source>
</evidence>
<evidence type="ECO:0000256" key="2">
    <source>
        <dbReference type="SAM" id="MobiDB-lite"/>
    </source>
</evidence>
<evidence type="ECO:0000303" key="3">
    <source>
    </source>
</evidence>
<evidence type="ECO:0000305" key="4"/>
<evidence type="ECO:0000312" key="5">
    <source>
        <dbReference type="EMBL" id="BAD07807.1"/>
    </source>
</evidence>
<evidence type="ECO:0000312" key="6">
    <source>
        <dbReference type="EMBL" id="BAD08190.1"/>
    </source>
</evidence>
<evidence type="ECO:0000312" key="7">
    <source>
        <dbReference type="EMBL" id="BAS76519.1"/>
    </source>
</evidence>
<evidence type="ECO:0000312" key="8">
    <source>
        <dbReference type="EMBL" id="EEE56125.1"/>
    </source>
</evidence>
<gene>
    <name evidence="4" type="primary">KIN6</name>
    <name evidence="7" type="ordered locus">Os02g0101800</name>
    <name evidence="4" type="ordered locus">LOC_Os02g01180</name>
    <name evidence="6" type="ORF">B1370C05.21</name>
    <name evidence="5" type="ORF">OJ1435_F07.11</name>
    <name evidence="8" type="ORF">OsJ_04995</name>
</gene>
<comment type="similarity">
    <text evidence="3">Belongs to the TRAFAC class myosin-kinesin ATPase superfamily. Kinesin family. KIN-6 subfamily.</text>
</comment>
<comment type="sequence caution" evidence="4">
    <conflict type="erroneous gene model prediction">
        <sequence resource="EMBL-CDS" id="BAD07807"/>
    </conflict>
</comment>
<comment type="sequence caution" evidence="4">
    <conflict type="erroneous gene model prediction">
        <sequence resource="EMBL-CDS" id="BAD08190"/>
    </conflict>
</comment>
<comment type="sequence caution" evidence="4">
    <conflict type="erroneous gene model prediction">
        <sequence resource="EMBL-CDS" id="BAF07506"/>
    </conflict>
</comment>
<comment type="sequence caution" evidence="4">
    <conflict type="erroneous gene model prediction">
        <sequence resource="EMBL-CDS" id="BAS76519"/>
    </conflict>
</comment>
<comment type="sequence caution" evidence="4">
    <conflict type="erroneous gene model prediction">
        <sequence resource="EMBL-CDS" id="EEE56125"/>
    </conflict>
</comment>
<name>KN6_ORYSJ</name>
<proteinExistence type="evidence at transcript level"/>
<protein>
    <recommendedName>
        <fullName evidence="4">Kinesin-like protein KIN-6</fullName>
    </recommendedName>
</protein>
<organism>
    <name type="scientific">Oryza sativa subsp. japonica</name>
    <name type="common">Rice</name>
    <dbReference type="NCBI Taxonomy" id="39947"/>
    <lineage>
        <taxon>Eukaryota</taxon>
        <taxon>Viridiplantae</taxon>
        <taxon>Streptophyta</taxon>
        <taxon>Embryophyta</taxon>
        <taxon>Tracheophyta</taxon>
        <taxon>Spermatophyta</taxon>
        <taxon>Magnoliopsida</taxon>
        <taxon>Liliopsida</taxon>
        <taxon>Poales</taxon>
        <taxon>Poaceae</taxon>
        <taxon>BOP clade</taxon>
        <taxon>Oryzoideae</taxon>
        <taxon>Oryzeae</taxon>
        <taxon>Oryzinae</taxon>
        <taxon>Oryza</taxon>
        <taxon>Oryza sativa</taxon>
    </lineage>
</organism>
<feature type="chain" id="PRO_0000436275" description="Kinesin-like protein KIN-6">
    <location>
        <begin position="1"/>
        <end position="919"/>
    </location>
</feature>
<feature type="domain" description="Kinesin motor" evidence="1">
    <location>
        <begin position="72"/>
        <end position="415"/>
    </location>
</feature>
<feature type="region of interest" description="Disordered" evidence="2">
    <location>
        <begin position="1"/>
        <end position="59"/>
    </location>
</feature>
<feature type="region of interest" description="Disordered" evidence="2">
    <location>
        <begin position="591"/>
        <end position="615"/>
    </location>
</feature>
<feature type="region of interest" description="Disordered" evidence="2">
    <location>
        <begin position="674"/>
        <end position="700"/>
    </location>
</feature>
<feature type="region of interest" description="Disordered" evidence="2">
    <location>
        <begin position="711"/>
        <end position="730"/>
    </location>
</feature>
<feature type="region of interest" description="Disordered" evidence="2">
    <location>
        <begin position="737"/>
        <end position="764"/>
    </location>
</feature>
<feature type="region of interest" description="Disordered" evidence="2">
    <location>
        <begin position="886"/>
        <end position="919"/>
    </location>
</feature>
<feature type="compositionally biased region" description="Low complexity" evidence="2">
    <location>
        <begin position="28"/>
        <end position="45"/>
    </location>
</feature>
<feature type="compositionally biased region" description="Pro residues" evidence="2">
    <location>
        <begin position="46"/>
        <end position="56"/>
    </location>
</feature>
<feature type="compositionally biased region" description="Basic and acidic residues" evidence="2">
    <location>
        <begin position="597"/>
        <end position="612"/>
    </location>
</feature>
<feature type="compositionally biased region" description="Low complexity" evidence="2">
    <location>
        <begin position="685"/>
        <end position="697"/>
    </location>
</feature>
<feature type="compositionally biased region" description="Polar residues" evidence="2">
    <location>
        <begin position="755"/>
        <end position="764"/>
    </location>
</feature>
<feature type="compositionally biased region" description="Basic and acidic residues" evidence="2">
    <location>
        <begin position="886"/>
        <end position="912"/>
    </location>
</feature>
<feature type="binding site" evidence="1">
    <location>
        <begin position="171"/>
        <end position="178"/>
    </location>
    <ligand>
        <name>ATP</name>
        <dbReference type="ChEBI" id="CHEBI:30616"/>
    </ligand>
</feature>
<feature type="sequence conflict" description="In Ref. 5; AK102833." evidence="4" ref="5">
    <original>G</original>
    <variation>D</variation>
    <location>
        <position position="132"/>
    </location>
</feature>
<feature type="sequence conflict" description="In Ref. 5; AK102833." evidence="4" ref="5">
    <original>H</original>
    <variation>N</variation>
    <location>
        <position position="144"/>
    </location>
</feature>
<feature type="sequence conflict" description="In Ref. 5; AK102833." evidence="4" ref="5">
    <original>K</original>
    <variation>E</variation>
    <location>
        <position position="527"/>
    </location>
</feature>
<feature type="sequence conflict" description="In Ref. 5; AK102833." evidence="4" ref="5">
    <original>H</original>
    <variation>R</variation>
    <location>
        <position position="734"/>
    </location>
</feature>
<dbReference type="EMBL" id="AP004187">
    <property type="protein sequence ID" value="BAD07807.1"/>
    <property type="status" value="ALT_SEQ"/>
    <property type="molecule type" value="Genomic_DNA"/>
</dbReference>
<dbReference type="EMBL" id="AP005873">
    <property type="protein sequence ID" value="BAD08190.1"/>
    <property type="status" value="ALT_SEQ"/>
    <property type="molecule type" value="Genomic_DNA"/>
</dbReference>
<dbReference type="EMBL" id="AP008208">
    <property type="protein sequence ID" value="BAF07506.1"/>
    <property type="status" value="ALT_SEQ"/>
    <property type="molecule type" value="Genomic_DNA"/>
</dbReference>
<dbReference type="EMBL" id="AP014958">
    <property type="protein sequence ID" value="BAS76519.1"/>
    <property type="status" value="ALT_SEQ"/>
    <property type="molecule type" value="Genomic_DNA"/>
</dbReference>
<dbReference type="EMBL" id="CM000139">
    <property type="protein sequence ID" value="EEE56125.1"/>
    <property type="status" value="ALT_SEQ"/>
    <property type="molecule type" value="Genomic_DNA"/>
</dbReference>
<dbReference type="EMBL" id="AK102833">
    <property type="status" value="NOT_ANNOTATED_CDS"/>
    <property type="molecule type" value="mRNA"/>
</dbReference>
<dbReference type="SMR" id="Q6YU88"/>
<dbReference type="FunCoup" id="Q6YU88">
    <property type="interactions" value="20"/>
</dbReference>
<dbReference type="STRING" id="39947.Q6YU88"/>
<dbReference type="PaxDb" id="39947-Q6YU88"/>
<dbReference type="GeneID" id="4327984"/>
<dbReference type="KEGG" id="dosa:Os02g0101800"/>
<dbReference type="KEGG" id="osa:4327984"/>
<dbReference type="eggNOG" id="KOG0242">
    <property type="taxonomic scope" value="Eukaryota"/>
</dbReference>
<dbReference type="HOGENOM" id="CLU_001485_18_0_1"/>
<dbReference type="InParanoid" id="Q6YU88"/>
<dbReference type="OrthoDB" id="123929at2759"/>
<dbReference type="Proteomes" id="UP000000763">
    <property type="component" value="Chromosome 2"/>
</dbReference>
<dbReference type="Proteomes" id="UP000007752">
    <property type="component" value="Chromosome 2"/>
</dbReference>
<dbReference type="Proteomes" id="UP000059680">
    <property type="component" value="Chromosome 2"/>
</dbReference>
<dbReference type="GO" id="GO:0005737">
    <property type="term" value="C:cytoplasm"/>
    <property type="evidence" value="ECO:0000318"/>
    <property type="project" value="GO_Central"/>
</dbReference>
<dbReference type="GO" id="GO:0005871">
    <property type="term" value="C:kinesin complex"/>
    <property type="evidence" value="ECO:0000318"/>
    <property type="project" value="GO_Central"/>
</dbReference>
<dbReference type="GO" id="GO:0005874">
    <property type="term" value="C:microtubule"/>
    <property type="evidence" value="ECO:0000318"/>
    <property type="project" value="GO_Central"/>
</dbReference>
<dbReference type="GO" id="GO:0005634">
    <property type="term" value="C:nucleus"/>
    <property type="evidence" value="ECO:0000318"/>
    <property type="project" value="GO_Central"/>
</dbReference>
<dbReference type="GO" id="GO:0005524">
    <property type="term" value="F:ATP binding"/>
    <property type="evidence" value="ECO:0007669"/>
    <property type="project" value="UniProtKB-KW"/>
</dbReference>
<dbReference type="GO" id="GO:0016887">
    <property type="term" value="F:ATP hydrolysis activity"/>
    <property type="evidence" value="ECO:0000318"/>
    <property type="project" value="GO_Central"/>
</dbReference>
<dbReference type="GO" id="GO:0008017">
    <property type="term" value="F:microtubule binding"/>
    <property type="evidence" value="ECO:0000318"/>
    <property type="project" value="GO_Central"/>
</dbReference>
<dbReference type="GO" id="GO:0003777">
    <property type="term" value="F:microtubule motor activity"/>
    <property type="evidence" value="ECO:0000318"/>
    <property type="project" value="GO_Central"/>
</dbReference>
<dbReference type="GO" id="GO:0007018">
    <property type="term" value="P:microtubule-based movement"/>
    <property type="evidence" value="ECO:0000318"/>
    <property type="project" value="GO_Central"/>
</dbReference>
<dbReference type="FunFam" id="3.40.850.10:FF:000141">
    <property type="entry name" value="Kinesin-like protein KIN-6"/>
    <property type="match status" value="1"/>
</dbReference>
<dbReference type="Gene3D" id="3.40.850.10">
    <property type="entry name" value="Kinesin motor domain"/>
    <property type="match status" value="1"/>
</dbReference>
<dbReference type="InterPro" id="IPR027640">
    <property type="entry name" value="Kinesin-like_fam"/>
</dbReference>
<dbReference type="InterPro" id="IPR001752">
    <property type="entry name" value="Kinesin_motor_dom"/>
</dbReference>
<dbReference type="InterPro" id="IPR036961">
    <property type="entry name" value="Kinesin_motor_dom_sf"/>
</dbReference>
<dbReference type="InterPro" id="IPR027417">
    <property type="entry name" value="P-loop_NTPase"/>
</dbReference>
<dbReference type="PANTHER" id="PTHR24115:SF1008">
    <property type="entry name" value="KINESIN-LIKE PROTEIN SUBITO"/>
    <property type="match status" value="1"/>
</dbReference>
<dbReference type="PANTHER" id="PTHR24115">
    <property type="entry name" value="KINESIN-RELATED"/>
    <property type="match status" value="1"/>
</dbReference>
<dbReference type="Pfam" id="PF00225">
    <property type="entry name" value="Kinesin"/>
    <property type="match status" value="1"/>
</dbReference>
<dbReference type="PRINTS" id="PR00380">
    <property type="entry name" value="KINESINHEAVY"/>
</dbReference>
<dbReference type="SMART" id="SM00129">
    <property type="entry name" value="KISc"/>
    <property type="match status" value="1"/>
</dbReference>
<dbReference type="SUPFAM" id="SSF52540">
    <property type="entry name" value="P-loop containing nucleoside triphosphate hydrolases"/>
    <property type="match status" value="1"/>
</dbReference>
<dbReference type="PROSITE" id="PS50067">
    <property type="entry name" value="KINESIN_MOTOR_2"/>
    <property type="match status" value="1"/>
</dbReference>
<sequence>MVRLSTKPPNPKVEMNLKEPPITGAGAGAAASPPAPSTLRRNPPRSARPPPTPLPNSKPSQISRLLEEAAERLKVFLRIRPLPLPERKGKAKSPTNPKQVCLVANSPNSVALTVPHSKLLDPKRGRTEVFDGFSSVFSPDSSQHDVFSQVMNPLVDDLLLGGKSGLLVAMGPTGSGKTHTVFGSPRNPGLVPLTLRRIFSPTTHEPFSKLRSFCFSMFEILSEGKGERILDLLSDATDLVLQQSTIKGLKEVSVENFADAEALLFSGMLKRTTAATNANSKSSRSQCIITIRAVHKSSDAESENSLNNAVLTIADLAGAERERRTGNQGTRLLESNFINNTSMVFGLCLRSLLEHQKNKKKPLEKHFKNSMLTRYLRDYLEGRKKMTLILNVKPGDDDYLDTSFLLRQASPYMKIKYTNLEDSSGLVSQKRSSASLICQENTKKRKIHKVAGKDDIDKDDGVTISEKDESQYKLLNSELRRVSRNEEIMTNFARALWTVLKQYKQKLLESENAVESTRELLRSKDIKIMELEKKLKVLSCSCKKFPAVEDTFVEQNNDVSSGQVAQSFVSLSSQTDLVSIDSALNKSLAVEEVSEESTGHGPERSSDYDDKTGTGGSDVCDTSIIKLIAEEELCSGDCKPEKASSSDAFIPEHDVEKENIGIVVQVLDKKLDRSESCSDGGGVTHSSSSLDHPSDQSFTDTCLQNESANLSPQFIGASKKSPIEQSEEEREEIHNITTEGIQQNVHTRGVKHHSTPSCSQEVNSGSLHVSSSQLQGMGALQQDPQSERCKPTVEITIVEYGCAQPPHVVDDHGGMYPCTLNGKSSPRKAPISPTKDNQAEKLTDKIEDLSASKPCNRKNTRRRLQPVSAMMLKEFTGPDIFVDTRKEEKVKSSRDAMGRSDKLIRLLTDHPPRARGRAQ</sequence>